<dbReference type="EC" id="3.1.1.96" evidence="1"/>
<dbReference type="EMBL" id="CP000656">
    <property type="protein sequence ID" value="ABP44724.1"/>
    <property type="molecule type" value="Genomic_DNA"/>
</dbReference>
<dbReference type="SMR" id="A4T8S3"/>
<dbReference type="STRING" id="350054.Mflv_2246"/>
<dbReference type="KEGG" id="mgi:Mflv_2246"/>
<dbReference type="eggNOG" id="COG1490">
    <property type="taxonomic scope" value="Bacteria"/>
</dbReference>
<dbReference type="HOGENOM" id="CLU_076901_1_2_11"/>
<dbReference type="OrthoDB" id="9801395at2"/>
<dbReference type="GO" id="GO:0005737">
    <property type="term" value="C:cytoplasm"/>
    <property type="evidence" value="ECO:0007669"/>
    <property type="project" value="UniProtKB-SubCell"/>
</dbReference>
<dbReference type="GO" id="GO:0051500">
    <property type="term" value="F:D-tyrosyl-tRNA(Tyr) deacylase activity"/>
    <property type="evidence" value="ECO:0007669"/>
    <property type="project" value="TreeGrafter"/>
</dbReference>
<dbReference type="GO" id="GO:0106026">
    <property type="term" value="F:Gly-tRNA(Ala) deacylase activity"/>
    <property type="evidence" value="ECO:0007669"/>
    <property type="project" value="UniProtKB-UniRule"/>
</dbReference>
<dbReference type="GO" id="GO:0043908">
    <property type="term" value="F:Ser(Gly)-tRNA(Ala) hydrolase activity"/>
    <property type="evidence" value="ECO:0007669"/>
    <property type="project" value="UniProtKB-UniRule"/>
</dbReference>
<dbReference type="GO" id="GO:0000049">
    <property type="term" value="F:tRNA binding"/>
    <property type="evidence" value="ECO:0007669"/>
    <property type="project" value="UniProtKB-UniRule"/>
</dbReference>
<dbReference type="GO" id="GO:0019478">
    <property type="term" value="P:D-amino acid catabolic process"/>
    <property type="evidence" value="ECO:0007669"/>
    <property type="project" value="UniProtKB-UniRule"/>
</dbReference>
<dbReference type="FunFam" id="3.50.80.10:FF:000001">
    <property type="entry name" value="D-aminoacyl-tRNA deacylase"/>
    <property type="match status" value="1"/>
</dbReference>
<dbReference type="Gene3D" id="3.50.80.10">
    <property type="entry name" value="D-tyrosyl-tRNA(Tyr) deacylase"/>
    <property type="match status" value="1"/>
</dbReference>
<dbReference type="HAMAP" id="MF_00518">
    <property type="entry name" value="Deacylase_Dtd"/>
    <property type="match status" value="1"/>
</dbReference>
<dbReference type="InterPro" id="IPR003732">
    <property type="entry name" value="Daa-tRNA_deacyls_DTD"/>
</dbReference>
<dbReference type="InterPro" id="IPR023509">
    <property type="entry name" value="DTD-like_sf"/>
</dbReference>
<dbReference type="NCBIfam" id="TIGR00256">
    <property type="entry name" value="D-aminoacyl-tRNA deacylase"/>
    <property type="match status" value="1"/>
</dbReference>
<dbReference type="PANTHER" id="PTHR10472:SF5">
    <property type="entry name" value="D-AMINOACYL-TRNA DEACYLASE 1"/>
    <property type="match status" value="1"/>
</dbReference>
<dbReference type="PANTHER" id="PTHR10472">
    <property type="entry name" value="D-TYROSYL-TRNA TYR DEACYLASE"/>
    <property type="match status" value="1"/>
</dbReference>
<dbReference type="Pfam" id="PF02580">
    <property type="entry name" value="Tyr_Deacylase"/>
    <property type="match status" value="1"/>
</dbReference>
<dbReference type="SUPFAM" id="SSF69500">
    <property type="entry name" value="DTD-like"/>
    <property type="match status" value="1"/>
</dbReference>
<comment type="function">
    <text evidence="1">An aminoacyl-tRNA editing enzyme that deacylates mischarged D-aminoacyl-tRNAs. Also deacylates mischarged glycyl-tRNA(Ala), protecting cells against glycine mischarging by AlaRS. Acts via tRNA-based rather than protein-based catalysis; rejects L-amino acids rather than detecting D-amino acids in the active site. By recycling D-aminoacyl-tRNA to D-amino acids and free tRNA molecules, this enzyme counteracts the toxicity associated with the formation of D-aminoacyl-tRNA entities in vivo and helps enforce protein L-homochirality.</text>
</comment>
<comment type="catalytic activity">
    <reaction evidence="1">
        <text>glycyl-tRNA(Ala) + H2O = tRNA(Ala) + glycine + H(+)</text>
        <dbReference type="Rhea" id="RHEA:53744"/>
        <dbReference type="Rhea" id="RHEA-COMP:9657"/>
        <dbReference type="Rhea" id="RHEA-COMP:13640"/>
        <dbReference type="ChEBI" id="CHEBI:15377"/>
        <dbReference type="ChEBI" id="CHEBI:15378"/>
        <dbReference type="ChEBI" id="CHEBI:57305"/>
        <dbReference type="ChEBI" id="CHEBI:78442"/>
        <dbReference type="ChEBI" id="CHEBI:78522"/>
        <dbReference type="EC" id="3.1.1.96"/>
    </reaction>
</comment>
<comment type="catalytic activity">
    <reaction evidence="1">
        <text>a D-aminoacyl-tRNA + H2O = a tRNA + a D-alpha-amino acid + H(+)</text>
        <dbReference type="Rhea" id="RHEA:13953"/>
        <dbReference type="Rhea" id="RHEA-COMP:10123"/>
        <dbReference type="Rhea" id="RHEA-COMP:10124"/>
        <dbReference type="ChEBI" id="CHEBI:15377"/>
        <dbReference type="ChEBI" id="CHEBI:15378"/>
        <dbReference type="ChEBI" id="CHEBI:59871"/>
        <dbReference type="ChEBI" id="CHEBI:78442"/>
        <dbReference type="ChEBI" id="CHEBI:79333"/>
        <dbReference type="EC" id="3.1.1.96"/>
    </reaction>
</comment>
<comment type="subunit">
    <text evidence="1">Homodimer.</text>
</comment>
<comment type="subcellular location">
    <subcellularLocation>
        <location evidence="1">Cytoplasm</location>
    </subcellularLocation>
</comment>
<comment type="domain">
    <text evidence="1">A Gly-cisPro motif from one monomer fits into the active site of the other monomer to allow specific chiral rejection of L-amino acids.</text>
</comment>
<comment type="similarity">
    <text evidence="1">Belongs to the DTD family.</text>
</comment>
<accession>A4T8S3</accession>
<evidence type="ECO:0000255" key="1">
    <source>
        <dbReference type="HAMAP-Rule" id="MF_00518"/>
    </source>
</evidence>
<proteinExistence type="inferred from homology"/>
<keyword id="KW-0963">Cytoplasm</keyword>
<keyword id="KW-0378">Hydrolase</keyword>
<keyword id="KW-0694">RNA-binding</keyword>
<keyword id="KW-0820">tRNA-binding</keyword>
<gene>
    <name evidence="1" type="primary">dtd</name>
    <name type="ordered locus">Mflv_2246</name>
</gene>
<feature type="chain" id="PRO_1000081658" description="D-aminoacyl-tRNA deacylase">
    <location>
        <begin position="1"/>
        <end position="143"/>
    </location>
</feature>
<feature type="short sequence motif" description="Gly-cisPro motif, important for rejection of L-amino acids" evidence="1">
    <location>
        <begin position="135"/>
        <end position="136"/>
    </location>
</feature>
<organism>
    <name type="scientific">Mycolicibacterium gilvum (strain PYR-GCK)</name>
    <name type="common">Mycobacterium gilvum (strain PYR-GCK)</name>
    <dbReference type="NCBI Taxonomy" id="350054"/>
    <lineage>
        <taxon>Bacteria</taxon>
        <taxon>Bacillati</taxon>
        <taxon>Actinomycetota</taxon>
        <taxon>Actinomycetes</taxon>
        <taxon>Mycobacteriales</taxon>
        <taxon>Mycobacteriaceae</taxon>
        <taxon>Mycolicibacterium</taxon>
    </lineage>
</organism>
<sequence>MRILVQRVTSARVIVGGDVVGAIEPETQGLLALVGVTHDDDHMKARRLAEKLWSLRILDDEKSASDIGAPILVVSQFTLYGNTTKGRRPTWNAAAPGPVAEPLVSDFAAALESLGATVQTGVFGADMQVELVNDGPVTVLLEL</sequence>
<name>DTD_MYCGI</name>
<reference key="1">
    <citation type="submission" date="2007-04" db="EMBL/GenBank/DDBJ databases">
        <title>Complete sequence of chromosome of Mycobacterium gilvum PYR-GCK.</title>
        <authorList>
            <consortium name="US DOE Joint Genome Institute"/>
            <person name="Copeland A."/>
            <person name="Lucas S."/>
            <person name="Lapidus A."/>
            <person name="Barry K."/>
            <person name="Detter J.C."/>
            <person name="Glavina del Rio T."/>
            <person name="Hammon N."/>
            <person name="Israni S."/>
            <person name="Dalin E."/>
            <person name="Tice H."/>
            <person name="Pitluck S."/>
            <person name="Chain P."/>
            <person name="Malfatti S."/>
            <person name="Shin M."/>
            <person name="Vergez L."/>
            <person name="Schmutz J."/>
            <person name="Larimer F."/>
            <person name="Land M."/>
            <person name="Hauser L."/>
            <person name="Kyrpides N."/>
            <person name="Mikhailova N."/>
            <person name="Miller C."/>
            <person name="Richardson P."/>
        </authorList>
    </citation>
    <scope>NUCLEOTIDE SEQUENCE [LARGE SCALE GENOMIC DNA]</scope>
    <source>
        <strain>PYR-GCK</strain>
    </source>
</reference>
<protein>
    <recommendedName>
        <fullName evidence="1">D-aminoacyl-tRNA deacylase</fullName>
        <shortName evidence="1">DTD</shortName>
        <ecNumber evidence="1">3.1.1.96</ecNumber>
    </recommendedName>
    <alternativeName>
        <fullName evidence="1">Gly-tRNA(Ala) deacylase</fullName>
    </alternativeName>
</protein>